<name>PPR18_PIG</name>
<comment type="function">
    <text evidence="1">May target protein phosphatase 1 to F-actin cytoskeleton.</text>
</comment>
<comment type="subunit">
    <text evidence="1">Interacts with Protein phosphatase 1 (PP1).</text>
</comment>
<comment type="subcellular location">
    <subcellularLocation>
        <location evidence="1">Cytoplasm</location>
        <location evidence="1">Cytoskeleton</location>
    </subcellularLocation>
</comment>
<reference key="1">
    <citation type="journal article" date="2004" name="Immunogenetics">
        <title>Nucleotide sequencing analysis of the swine 433-kb genomic segment located between the non-classical and classical SLA class I gene clusters.</title>
        <authorList>
            <person name="Shigenari A."/>
            <person name="Ando A."/>
            <person name="Renard C."/>
            <person name="Chardon P."/>
            <person name="Shiina T."/>
            <person name="Kulski J.K."/>
            <person name="Yasue H."/>
            <person name="Inoko H."/>
        </authorList>
    </citation>
    <scope>NUCLEOTIDE SEQUENCE [LARGE SCALE GENOMIC DNA]</scope>
    <source>
        <strain>Large white</strain>
    </source>
</reference>
<keyword id="KW-0007">Acetylation</keyword>
<keyword id="KW-0009">Actin-binding</keyword>
<keyword id="KW-0963">Cytoplasm</keyword>
<keyword id="KW-0206">Cytoskeleton</keyword>
<keyword id="KW-0597">Phosphoprotein</keyword>
<keyword id="KW-1185">Reference proteome</keyword>
<gene>
    <name type="primary">PPP1R18</name>
</gene>
<evidence type="ECO:0000250" key="1"/>
<evidence type="ECO:0000250" key="2">
    <source>
        <dbReference type="UniProtKB" id="Q6NYC8"/>
    </source>
</evidence>
<evidence type="ECO:0000250" key="3">
    <source>
        <dbReference type="UniProtKB" id="Q8BQ30"/>
    </source>
</evidence>
<evidence type="ECO:0000256" key="4">
    <source>
        <dbReference type="SAM" id="MobiDB-lite"/>
    </source>
</evidence>
<proteinExistence type="inferred from homology"/>
<feature type="chain" id="PRO_0000050810" description="Phostensin">
    <location>
        <begin position="1"/>
        <end position="618"/>
    </location>
</feature>
<feature type="region of interest" description="Disordered" evidence="4">
    <location>
        <begin position="15"/>
        <end position="505"/>
    </location>
</feature>
<feature type="region of interest" description="Disordered" evidence="4">
    <location>
        <begin position="556"/>
        <end position="594"/>
    </location>
</feature>
<feature type="compositionally biased region" description="Basic and acidic residues" evidence="4">
    <location>
        <begin position="15"/>
        <end position="33"/>
    </location>
</feature>
<feature type="compositionally biased region" description="Low complexity" evidence="4">
    <location>
        <begin position="96"/>
        <end position="109"/>
    </location>
</feature>
<feature type="compositionally biased region" description="Basic and acidic residues" evidence="4">
    <location>
        <begin position="110"/>
        <end position="160"/>
    </location>
</feature>
<feature type="compositionally biased region" description="Basic and acidic residues" evidence="4">
    <location>
        <begin position="173"/>
        <end position="197"/>
    </location>
</feature>
<feature type="compositionally biased region" description="Basic and acidic residues" evidence="4">
    <location>
        <begin position="234"/>
        <end position="245"/>
    </location>
</feature>
<feature type="compositionally biased region" description="Basic and acidic residues" evidence="4">
    <location>
        <begin position="271"/>
        <end position="289"/>
    </location>
</feature>
<feature type="compositionally biased region" description="Low complexity" evidence="4">
    <location>
        <begin position="308"/>
        <end position="319"/>
    </location>
</feature>
<feature type="compositionally biased region" description="Basic and acidic residues" evidence="4">
    <location>
        <begin position="348"/>
        <end position="358"/>
    </location>
</feature>
<feature type="compositionally biased region" description="Pro residues" evidence="4">
    <location>
        <begin position="429"/>
        <end position="451"/>
    </location>
</feature>
<feature type="compositionally biased region" description="Low complexity" evidence="4">
    <location>
        <begin position="485"/>
        <end position="505"/>
    </location>
</feature>
<feature type="compositionally biased region" description="Pro residues" evidence="4">
    <location>
        <begin position="572"/>
        <end position="583"/>
    </location>
</feature>
<feature type="compositionally biased region" description="Acidic residues" evidence="4">
    <location>
        <begin position="585"/>
        <end position="594"/>
    </location>
</feature>
<feature type="modified residue" description="Phosphoserine" evidence="2">
    <location>
        <position position="54"/>
    </location>
</feature>
<feature type="modified residue" description="Phosphoserine" evidence="2">
    <location>
        <position position="131"/>
    </location>
</feature>
<feature type="modified residue" description="Phosphoserine" evidence="2">
    <location>
        <position position="139"/>
    </location>
</feature>
<feature type="modified residue" description="Phosphoserine" evidence="2">
    <location>
        <position position="181"/>
    </location>
</feature>
<feature type="modified residue" description="Phosphoserine" evidence="2">
    <location>
        <position position="201"/>
    </location>
</feature>
<feature type="modified residue" description="Phosphothreonine" evidence="2">
    <location>
        <position position="205"/>
    </location>
</feature>
<feature type="modified residue" description="Phosphoserine" evidence="2">
    <location>
        <position position="231"/>
    </location>
</feature>
<feature type="modified residue" description="Phosphoserine" evidence="3">
    <location>
        <position position="437"/>
    </location>
</feature>
<feature type="modified residue" description="N6-acetyllysine" evidence="3">
    <location>
        <position position="462"/>
    </location>
</feature>
<feature type="modified residue" description="Phosphoserine" evidence="3">
    <location>
        <position position="535"/>
    </location>
</feature>
<dbReference type="EMBL" id="AB113356">
    <property type="protein sequence ID" value="BAD08432.1"/>
    <property type="molecule type" value="Genomic_DNA"/>
</dbReference>
<dbReference type="RefSeq" id="NP_001121952.1">
    <property type="nucleotide sequence ID" value="NM_001128480.1"/>
</dbReference>
<dbReference type="SMR" id="Q767M0"/>
<dbReference type="FunCoup" id="Q767M0">
    <property type="interactions" value="263"/>
</dbReference>
<dbReference type="STRING" id="9823.ENSSSCP00000044714"/>
<dbReference type="GlyGen" id="Q767M0">
    <property type="glycosylation" value="2 sites"/>
</dbReference>
<dbReference type="PaxDb" id="9823-ENSSSCP00000030846"/>
<dbReference type="PeptideAtlas" id="Q767M0"/>
<dbReference type="Ensembl" id="ENSSSCT00115013512">
    <property type="protein sequence ID" value="ENSSSCP00115012770"/>
    <property type="gene ID" value="ENSSSCG00115007731"/>
</dbReference>
<dbReference type="GeneID" id="100151743"/>
<dbReference type="KEGG" id="ssc:100151743"/>
<dbReference type="CTD" id="170954"/>
<dbReference type="eggNOG" id="ENOG502RY8Q">
    <property type="taxonomic scope" value="Eukaryota"/>
</dbReference>
<dbReference type="InParanoid" id="Q767M0"/>
<dbReference type="OrthoDB" id="9945184at2759"/>
<dbReference type="Proteomes" id="UP000008227">
    <property type="component" value="Unplaced"/>
</dbReference>
<dbReference type="Proteomes" id="UP000314985">
    <property type="component" value="Unplaced"/>
</dbReference>
<dbReference type="Proteomes" id="UP000694570">
    <property type="component" value="Unplaced"/>
</dbReference>
<dbReference type="Proteomes" id="UP000694571">
    <property type="component" value="Unplaced"/>
</dbReference>
<dbReference type="Proteomes" id="UP000694720">
    <property type="component" value="Unplaced"/>
</dbReference>
<dbReference type="Proteomes" id="UP000694722">
    <property type="component" value="Unplaced"/>
</dbReference>
<dbReference type="Proteomes" id="UP000694723">
    <property type="component" value="Unplaced"/>
</dbReference>
<dbReference type="Proteomes" id="UP000694724">
    <property type="component" value="Unplaced"/>
</dbReference>
<dbReference type="Proteomes" id="UP000694725">
    <property type="component" value="Unplaced"/>
</dbReference>
<dbReference type="Proteomes" id="UP000694726">
    <property type="component" value="Unplaced"/>
</dbReference>
<dbReference type="Proteomes" id="UP000694727">
    <property type="component" value="Unplaced"/>
</dbReference>
<dbReference type="Proteomes" id="UP000694728">
    <property type="component" value="Unplaced"/>
</dbReference>
<dbReference type="GO" id="GO:0005737">
    <property type="term" value="C:cytoplasm"/>
    <property type="evidence" value="ECO:0007669"/>
    <property type="project" value="UniProtKB-KW"/>
</dbReference>
<dbReference type="GO" id="GO:0005856">
    <property type="term" value="C:cytoskeleton"/>
    <property type="evidence" value="ECO:0007669"/>
    <property type="project" value="UniProtKB-SubCell"/>
</dbReference>
<dbReference type="GO" id="GO:0003779">
    <property type="term" value="F:actin binding"/>
    <property type="evidence" value="ECO:0007669"/>
    <property type="project" value="UniProtKB-KW"/>
</dbReference>
<dbReference type="GO" id="GO:0019902">
    <property type="term" value="F:phosphatase binding"/>
    <property type="evidence" value="ECO:0007669"/>
    <property type="project" value="InterPro"/>
</dbReference>
<dbReference type="InterPro" id="IPR025903">
    <property type="entry name" value="Phostensin/Taperin_N_dom"/>
</dbReference>
<dbReference type="InterPro" id="IPR025907">
    <property type="entry name" value="Phostensin/Taperin_PP1-bd_dom"/>
</dbReference>
<dbReference type="InterPro" id="IPR026671">
    <property type="entry name" value="PPP1R18/Tprn"/>
</dbReference>
<dbReference type="PANTHER" id="PTHR21685:SF0">
    <property type="entry name" value="PHOSTENSIN"/>
    <property type="match status" value="1"/>
</dbReference>
<dbReference type="PANTHER" id="PTHR21685">
    <property type="entry name" value="TON-B BOX DOMAIN"/>
    <property type="match status" value="1"/>
</dbReference>
<dbReference type="Pfam" id="PF13914">
    <property type="entry name" value="Phostensin"/>
    <property type="match status" value="1"/>
</dbReference>
<dbReference type="Pfam" id="PF13916">
    <property type="entry name" value="Phostensin_N"/>
    <property type="match status" value="1"/>
</dbReference>
<sequence length="618" mass="67962">MATIPDWKLQLLARRRQEEAAVRGREKAERERLSQMPAWKRGLLERRRAKLGLSPGEPSPAPGTTEAGPPDPDKSAVLLEAIGPVHQNRFIRQERQQQQQQQQQQQQQQRSEELLAERRPGLLEAREWRSSPGEMRDQSPKERESREERLSPREARERRLGIGGARESSPRPLESRDWRQSPGEAGDRSSRLSEVRKWRLSPGETPERSLRPAEPQEQSPRRKEVVESRLSPADSDHEKLGLTDAHKRRPDSGESQEQSLVLEASEWRLSSGEERKDCLEECGRKEERTLPGMVPEDITGSPETLTMEAAGSSSGGVEAADQRPIPVEDGERDLRLSEGWKWTLNSGKVRDRTPRDTETQSQKPESAEKHLGPLGAEAGEGEAEKEEAGAQGRPLSALQNRCSVPSPLPPEDAGTGGSRQQEEEAGELRPPPAAPLSPPPPAPPAPQPPGDPLMSRLFYGVKAGPGVGAPRRSGHTFTVNPRRSAPPAAAATPATPATADAAVPGAGKKRYPTAEEILVLGGYLRLSRSCLAKGSPERHHKQLKISFSETALETTYQYPSESSVLEELGPEPEAPSAPSPPAAQPDDEEDEEELLLLQRELQGGLRTKALIVDESCRR</sequence>
<organism>
    <name type="scientific">Sus scrofa</name>
    <name type="common">Pig</name>
    <dbReference type="NCBI Taxonomy" id="9823"/>
    <lineage>
        <taxon>Eukaryota</taxon>
        <taxon>Metazoa</taxon>
        <taxon>Chordata</taxon>
        <taxon>Craniata</taxon>
        <taxon>Vertebrata</taxon>
        <taxon>Euteleostomi</taxon>
        <taxon>Mammalia</taxon>
        <taxon>Eutheria</taxon>
        <taxon>Laurasiatheria</taxon>
        <taxon>Artiodactyla</taxon>
        <taxon>Suina</taxon>
        <taxon>Suidae</taxon>
        <taxon>Sus</taxon>
    </lineage>
</organism>
<accession>Q767M0</accession>
<protein>
    <recommendedName>
        <fullName>Phostensin</fullName>
    </recommendedName>
    <alternativeName>
        <fullName>Protein phosphatase 1 F-actin cytoskeleton targeting subunit</fullName>
    </alternativeName>
    <alternativeName>
        <fullName>Protein phosphatase 1 regulatory subunit 18</fullName>
    </alternativeName>
</protein>